<protein>
    <recommendedName>
        <fullName evidence="1">Histidine--tRNA ligase</fullName>
        <ecNumber evidence="1">6.1.1.21</ecNumber>
    </recommendedName>
    <alternativeName>
        <fullName evidence="1">Histidyl-tRNA synthetase</fullName>
        <shortName evidence="1">HisRS</shortName>
    </alternativeName>
</protein>
<accession>A5ITF5</accession>
<sequence>MIKIPRGTQDILPEDSKKWRYIENQLDELMTFYNYKEIRTPIFESTDLFARGVGDSTDVVQKEMYTFKDKGDRSITLRPEGTAAVVRSYIEHKMQGNPNQPIKLYYNGPMFRYERKQKGRYRQFNQFGVEAIGAENPSVDAEVLAMVMHIYQSFGLKHLKLVINSVGDMASRKEYNEALVKHFEPVIHEFCSDCQSRLHTNPMRILDCKVDRDKEAIKTAPRITDFLNEESKAYYEQVKAYLDDLGIPYIEDPNLVRGLDYYTHTAFELMMDNPNYDGAITTLCGGGRYNGLLELLDGPSETGIGFALSIERLLLALEEEGIELDIEENLDLFIVTMGDQADRYAVKLLNHLRHNGIKADKDYLQRKIKGQMKQADRLGAKFTIVIGDQELENNKIDVKNMTTGESETIELDALVEYFKK</sequence>
<organism>
    <name type="scientific">Staphylococcus aureus (strain JH9)</name>
    <dbReference type="NCBI Taxonomy" id="359786"/>
    <lineage>
        <taxon>Bacteria</taxon>
        <taxon>Bacillati</taxon>
        <taxon>Bacillota</taxon>
        <taxon>Bacilli</taxon>
        <taxon>Bacillales</taxon>
        <taxon>Staphylococcaceae</taxon>
        <taxon>Staphylococcus</taxon>
    </lineage>
</organism>
<dbReference type="EC" id="6.1.1.21" evidence="1"/>
<dbReference type="EMBL" id="CP000703">
    <property type="protein sequence ID" value="ABQ49478.1"/>
    <property type="molecule type" value="Genomic_DNA"/>
</dbReference>
<dbReference type="RefSeq" id="WP_000590826.1">
    <property type="nucleotide sequence ID" value="NC_009487.1"/>
</dbReference>
<dbReference type="SMR" id="A5ITF5"/>
<dbReference type="KEGG" id="saj:SaurJH9_1688"/>
<dbReference type="HOGENOM" id="CLU_025113_1_1_9"/>
<dbReference type="GO" id="GO:0005737">
    <property type="term" value="C:cytoplasm"/>
    <property type="evidence" value="ECO:0007669"/>
    <property type="project" value="UniProtKB-SubCell"/>
</dbReference>
<dbReference type="GO" id="GO:0005524">
    <property type="term" value="F:ATP binding"/>
    <property type="evidence" value="ECO:0007669"/>
    <property type="project" value="UniProtKB-UniRule"/>
</dbReference>
<dbReference type="GO" id="GO:0140096">
    <property type="term" value="F:catalytic activity, acting on a protein"/>
    <property type="evidence" value="ECO:0007669"/>
    <property type="project" value="UniProtKB-ARBA"/>
</dbReference>
<dbReference type="GO" id="GO:0004821">
    <property type="term" value="F:histidine-tRNA ligase activity"/>
    <property type="evidence" value="ECO:0007669"/>
    <property type="project" value="UniProtKB-UniRule"/>
</dbReference>
<dbReference type="GO" id="GO:0016740">
    <property type="term" value="F:transferase activity"/>
    <property type="evidence" value="ECO:0007669"/>
    <property type="project" value="UniProtKB-ARBA"/>
</dbReference>
<dbReference type="GO" id="GO:0006427">
    <property type="term" value="P:histidyl-tRNA aminoacylation"/>
    <property type="evidence" value="ECO:0007669"/>
    <property type="project" value="UniProtKB-UniRule"/>
</dbReference>
<dbReference type="CDD" id="cd00738">
    <property type="entry name" value="HGTP_anticodon"/>
    <property type="match status" value="1"/>
</dbReference>
<dbReference type="CDD" id="cd00773">
    <property type="entry name" value="HisRS-like_core"/>
    <property type="match status" value="1"/>
</dbReference>
<dbReference type="FunFam" id="3.30.930.10:FF:000005">
    <property type="entry name" value="Histidine--tRNA ligase"/>
    <property type="match status" value="1"/>
</dbReference>
<dbReference type="Gene3D" id="3.40.50.800">
    <property type="entry name" value="Anticodon-binding domain"/>
    <property type="match status" value="1"/>
</dbReference>
<dbReference type="Gene3D" id="3.30.930.10">
    <property type="entry name" value="Bira Bifunctional Protein, Domain 2"/>
    <property type="match status" value="1"/>
</dbReference>
<dbReference type="HAMAP" id="MF_00127">
    <property type="entry name" value="His_tRNA_synth"/>
    <property type="match status" value="1"/>
</dbReference>
<dbReference type="InterPro" id="IPR006195">
    <property type="entry name" value="aa-tRNA-synth_II"/>
</dbReference>
<dbReference type="InterPro" id="IPR045864">
    <property type="entry name" value="aa-tRNA-synth_II/BPL/LPL"/>
</dbReference>
<dbReference type="InterPro" id="IPR004154">
    <property type="entry name" value="Anticodon-bd"/>
</dbReference>
<dbReference type="InterPro" id="IPR036621">
    <property type="entry name" value="Anticodon-bd_dom_sf"/>
</dbReference>
<dbReference type="InterPro" id="IPR015807">
    <property type="entry name" value="His-tRNA-ligase"/>
</dbReference>
<dbReference type="InterPro" id="IPR041715">
    <property type="entry name" value="HisRS-like_core"/>
</dbReference>
<dbReference type="InterPro" id="IPR004516">
    <property type="entry name" value="HisRS/HisZ"/>
</dbReference>
<dbReference type="NCBIfam" id="TIGR00442">
    <property type="entry name" value="hisS"/>
    <property type="match status" value="1"/>
</dbReference>
<dbReference type="PANTHER" id="PTHR43707:SF1">
    <property type="entry name" value="HISTIDINE--TRNA LIGASE, MITOCHONDRIAL-RELATED"/>
    <property type="match status" value="1"/>
</dbReference>
<dbReference type="PANTHER" id="PTHR43707">
    <property type="entry name" value="HISTIDYL-TRNA SYNTHETASE"/>
    <property type="match status" value="1"/>
</dbReference>
<dbReference type="Pfam" id="PF03129">
    <property type="entry name" value="HGTP_anticodon"/>
    <property type="match status" value="1"/>
</dbReference>
<dbReference type="Pfam" id="PF13393">
    <property type="entry name" value="tRNA-synt_His"/>
    <property type="match status" value="1"/>
</dbReference>
<dbReference type="PIRSF" id="PIRSF001549">
    <property type="entry name" value="His-tRNA_synth"/>
    <property type="match status" value="1"/>
</dbReference>
<dbReference type="SUPFAM" id="SSF52954">
    <property type="entry name" value="Class II aaRS ABD-related"/>
    <property type="match status" value="1"/>
</dbReference>
<dbReference type="SUPFAM" id="SSF55681">
    <property type="entry name" value="Class II aaRS and biotin synthetases"/>
    <property type="match status" value="1"/>
</dbReference>
<dbReference type="PROSITE" id="PS50862">
    <property type="entry name" value="AA_TRNA_LIGASE_II"/>
    <property type="match status" value="1"/>
</dbReference>
<reference key="1">
    <citation type="submission" date="2007-05" db="EMBL/GenBank/DDBJ databases">
        <title>Complete sequence of chromosome of Staphylococcus aureus subsp. aureus JH9.</title>
        <authorList>
            <consortium name="US DOE Joint Genome Institute"/>
            <person name="Copeland A."/>
            <person name="Lucas S."/>
            <person name="Lapidus A."/>
            <person name="Barry K."/>
            <person name="Detter J.C."/>
            <person name="Glavina del Rio T."/>
            <person name="Hammon N."/>
            <person name="Israni S."/>
            <person name="Pitluck S."/>
            <person name="Chain P."/>
            <person name="Malfatti S."/>
            <person name="Shin M."/>
            <person name="Vergez L."/>
            <person name="Schmutz J."/>
            <person name="Larimer F."/>
            <person name="Land M."/>
            <person name="Hauser L."/>
            <person name="Kyrpides N."/>
            <person name="Kim E."/>
            <person name="Tomasz A."/>
            <person name="Richardson P."/>
        </authorList>
    </citation>
    <scope>NUCLEOTIDE SEQUENCE [LARGE SCALE GENOMIC DNA]</scope>
    <source>
        <strain>JH9</strain>
    </source>
</reference>
<feature type="chain" id="PRO_1000076291" description="Histidine--tRNA ligase">
    <location>
        <begin position="1"/>
        <end position="420"/>
    </location>
</feature>
<evidence type="ECO:0000255" key="1">
    <source>
        <dbReference type="HAMAP-Rule" id="MF_00127"/>
    </source>
</evidence>
<gene>
    <name evidence="1" type="primary">hisS</name>
    <name type="ordered locus">SaurJH9_1688</name>
</gene>
<name>SYH_STAA9</name>
<proteinExistence type="inferred from homology"/>
<keyword id="KW-0030">Aminoacyl-tRNA synthetase</keyword>
<keyword id="KW-0067">ATP-binding</keyword>
<keyword id="KW-0963">Cytoplasm</keyword>
<keyword id="KW-0436">Ligase</keyword>
<keyword id="KW-0547">Nucleotide-binding</keyword>
<keyword id="KW-0648">Protein biosynthesis</keyword>
<comment type="catalytic activity">
    <reaction evidence="1">
        <text>tRNA(His) + L-histidine + ATP = L-histidyl-tRNA(His) + AMP + diphosphate + H(+)</text>
        <dbReference type="Rhea" id="RHEA:17313"/>
        <dbReference type="Rhea" id="RHEA-COMP:9665"/>
        <dbReference type="Rhea" id="RHEA-COMP:9689"/>
        <dbReference type="ChEBI" id="CHEBI:15378"/>
        <dbReference type="ChEBI" id="CHEBI:30616"/>
        <dbReference type="ChEBI" id="CHEBI:33019"/>
        <dbReference type="ChEBI" id="CHEBI:57595"/>
        <dbReference type="ChEBI" id="CHEBI:78442"/>
        <dbReference type="ChEBI" id="CHEBI:78527"/>
        <dbReference type="ChEBI" id="CHEBI:456215"/>
        <dbReference type="EC" id="6.1.1.21"/>
    </reaction>
</comment>
<comment type="subunit">
    <text evidence="1">Homodimer.</text>
</comment>
<comment type="subcellular location">
    <subcellularLocation>
        <location evidence="1">Cytoplasm</location>
    </subcellularLocation>
</comment>
<comment type="similarity">
    <text evidence="1">Belongs to the class-II aminoacyl-tRNA synthetase family.</text>
</comment>